<feature type="chain" id="PRO_0000083164" description="Penicillin-binding protein 1A">
    <location>
        <begin position="1"/>
        <end position="850"/>
    </location>
</feature>
<feature type="topological domain" description="Cytoplasmic" evidence="2">
    <location>
        <begin position="1"/>
        <end position="5"/>
    </location>
</feature>
<feature type="transmembrane region" description="Helical; Signal-anchor for type II membrane protein" evidence="2">
    <location>
        <begin position="6"/>
        <end position="26"/>
    </location>
</feature>
<feature type="topological domain" description="Periplasmic" evidence="2">
    <location>
        <begin position="27"/>
        <end position="850"/>
    </location>
</feature>
<feature type="region of interest" description="Transglycosylase">
    <location>
        <begin position="48"/>
        <end position="216"/>
    </location>
</feature>
<feature type="region of interest" description="Transpeptidase">
    <location>
        <begin position="400"/>
        <end position="710"/>
    </location>
</feature>
<feature type="active site" description="Proton donor; for transglycosylase activity" evidence="1">
    <location>
        <position position="86"/>
    </location>
</feature>
<feature type="active site" description="Acyl-ester intermediate; for transpeptidase activity" evidence="1">
    <location>
        <position position="465"/>
    </location>
</feature>
<accession>P02918</accession>
<accession>P76688</accession>
<accession>Q2M761</accession>
<dbReference type="EC" id="2.4.99.28" evidence="3"/>
<dbReference type="EC" id="3.4.16.4" evidence="3"/>
<dbReference type="EMBL" id="X02164">
    <property type="protein sequence ID" value="CAA26100.1"/>
    <property type="molecule type" value="Genomic_DNA"/>
</dbReference>
<dbReference type="EMBL" id="U18997">
    <property type="protein sequence ID" value="AAA58193.1"/>
    <property type="status" value="ALT_INIT"/>
    <property type="molecule type" value="Genomic_DNA"/>
</dbReference>
<dbReference type="EMBL" id="U00096">
    <property type="protein sequence ID" value="AAC76421.2"/>
    <property type="molecule type" value="Genomic_DNA"/>
</dbReference>
<dbReference type="EMBL" id="AP009048">
    <property type="protein sequence ID" value="BAE77895.1"/>
    <property type="molecule type" value="Genomic_DNA"/>
</dbReference>
<dbReference type="PIR" id="G65134">
    <property type="entry name" value="ZPECPA"/>
</dbReference>
<dbReference type="RefSeq" id="NP_417855.4">
    <property type="nucleotide sequence ID" value="NC_000913.3"/>
</dbReference>
<dbReference type="RefSeq" id="WP_001336003.1">
    <property type="nucleotide sequence ID" value="NZ_SSZK01000008.1"/>
</dbReference>
<dbReference type="SMR" id="P02918"/>
<dbReference type="BioGRID" id="4262992">
    <property type="interactions" value="308"/>
</dbReference>
<dbReference type="ComplexPortal" id="CPX-5718">
    <property type="entry name" value="Elongasome complex"/>
</dbReference>
<dbReference type="DIP" id="DIP-10251N"/>
<dbReference type="FunCoup" id="P02918">
    <property type="interactions" value="417"/>
</dbReference>
<dbReference type="IntAct" id="P02918">
    <property type="interactions" value="9"/>
</dbReference>
<dbReference type="STRING" id="511145.b3396"/>
<dbReference type="ChEMBL" id="CHEMBL1813"/>
<dbReference type="DrugBank" id="DB01602">
    <property type="generic name" value="Bacampicillin"/>
</dbReference>
<dbReference type="DrugBank" id="DB01053">
    <property type="generic name" value="Benzylpenicillin"/>
</dbReference>
<dbReference type="DrugBank" id="DB00578">
    <property type="generic name" value="Carbenicillin"/>
</dbReference>
<dbReference type="DrugBank" id="DB09319">
    <property type="generic name" value="Carindacillin"/>
</dbReference>
<dbReference type="DrugBank" id="DB01414">
    <property type="generic name" value="Cefacetrile"/>
</dbReference>
<dbReference type="DrugBank" id="DB01327">
    <property type="generic name" value="Cefazolin"/>
</dbReference>
<dbReference type="DrugBank" id="DB01413">
    <property type="generic name" value="Cefepime"/>
</dbReference>
<dbReference type="DrugBank" id="DB00671">
    <property type="generic name" value="Cefixime"/>
</dbReference>
<dbReference type="DrugBank" id="DB00274">
    <property type="generic name" value="Cefmetazole"/>
</dbReference>
<dbReference type="DrugBank" id="DB01328">
    <property type="generic name" value="Cefonicid"/>
</dbReference>
<dbReference type="DrugBank" id="DB01329">
    <property type="generic name" value="Cefoperazone"/>
</dbReference>
<dbReference type="DrugBank" id="DB01331">
    <property type="generic name" value="Cefoxitin"/>
</dbReference>
<dbReference type="DrugBank" id="DB00430">
    <property type="generic name" value="Cefpiramide"/>
</dbReference>
<dbReference type="DrugBank" id="DB01333">
    <property type="generic name" value="Cefradine"/>
</dbReference>
<dbReference type="DrugBank" id="DB06590">
    <property type="generic name" value="Ceftaroline fosamil"/>
</dbReference>
<dbReference type="DrugBank" id="DB00438">
    <property type="generic name" value="Ceftazidime"/>
</dbReference>
<dbReference type="DrugBank" id="DB01415">
    <property type="generic name" value="Ceftibuten"/>
</dbReference>
<dbReference type="DrugBank" id="DB01332">
    <property type="generic name" value="Ceftizoxime"/>
</dbReference>
<dbReference type="DrugBank" id="DB09050">
    <property type="generic name" value="Ceftolozane"/>
</dbReference>
<dbReference type="DrugBank" id="DB01000">
    <property type="generic name" value="Cyclacillin"/>
</dbReference>
<dbReference type="DrugBank" id="DB06211">
    <property type="generic name" value="Doripenem"/>
</dbReference>
<dbReference type="DrugBank" id="DB00303">
    <property type="generic name" value="Ertapenem"/>
</dbReference>
<dbReference type="DrugBank" id="DB01598">
    <property type="generic name" value="Imipenem"/>
</dbReference>
<dbReference type="DrugBank" id="DB04570">
    <property type="generic name" value="Latamoxef"/>
</dbReference>
<dbReference type="DrugBank" id="DB09320">
    <property type="generic name" value="Procaine benzylpenicillin"/>
</dbReference>
<dbReference type="DrugBank" id="DB16335">
    <property type="generic name" value="Sulopenem etzadroxil"/>
</dbReference>
<dbReference type="DrugCentral" id="P02918"/>
<dbReference type="CAZy" id="GT51">
    <property type="family name" value="Glycosyltransferase Family 51"/>
</dbReference>
<dbReference type="jPOST" id="P02918"/>
<dbReference type="PaxDb" id="511145-b3396"/>
<dbReference type="EnsemblBacteria" id="AAC76421">
    <property type="protein sequence ID" value="AAC76421"/>
    <property type="gene ID" value="b3396"/>
</dbReference>
<dbReference type="GeneID" id="947907"/>
<dbReference type="KEGG" id="ecj:JW3359"/>
<dbReference type="KEGG" id="eco:b3396"/>
<dbReference type="KEGG" id="ecoc:C3026_18425"/>
<dbReference type="PATRIC" id="fig|1411691.4.peg.3334"/>
<dbReference type="EchoBASE" id="EB0741"/>
<dbReference type="eggNOG" id="COG5009">
    <property type="taxonomic scope" value="Bacteria"/>
</dbReference>
<dbReference type="HOGENOM" id="CLU_006354_2_4_6"/>
<dbReference type="InParanoid" id="P02918"/>
<dbReference type="OMA" id="LAQMAMI"/>
<dbReference type="OrthoDB" id="9766909at2"/>
<dbReference type="PhylomeDB" id="P02918"/>
<dbReference type="BioCyc" id="EcoCyc:EG10748-MONOMER"/>
<dbReference type="BioCyc" id="MetaCyc:EG10748-MONOMER"/>
<dbReference type="UniPathway" id="UPA00219"/>
<dbReference type="PRO" id="PR:P02918"/>
<dbReference type="Proteomes" id="UP000000625">
    <property type="component" value="Chromosome"/>
</dbReference>
<dbReference type="GO" id="GO:0030288">
    <property type="term" value="C:outer membrane-bounded periplasmic space"/>
    <property type="evidence" value="ECO:0000318"/>
    <property type="project" value="GO_Central"/>
</dbReference>
<dbReference type="GO" id="GO:0005886">
    <property type="term" value="C:plasma membrane"/>
    <property type="evidence" value="ECO:0000303"/>
    <property type="project" value="ComplexPortal"/>
</dbReference>
<dbReference type="GO" id="GO:0008658">
    <property type="term" value="F:penicillin binding"/>
    <property type="evidence" value="ECO:0000314"/>
    <property type="project" value="EcoCyc"/>
</dbReference>
<dbReference type="GO" id="GO:0008955">
    <property type="term" value="F:peptidoglycan glycosyltransferase activity"/>
    <property type="evidence" value="ECO:0000314"/>
    <property type="project" value="EcoCyc"/>
</dbReference>
<dbReference type="GO" id="GO:0009002">
    <property type="term" value="F:serine-type D-Ala-D-Ala carboxypeptidase activity"/>
    <property type="evidence" value="ECO:0000314"/>
    <property type="project" value="EcoCyc"/>
</dbReference>
<dbReference type="GO" id="GO:0071555">
    <property type="term" value="P:cell wall organization"/>
    <property type="evidence" value="ECO:0007669"/>
    <property type="project" value="UniProtKB-KW"/>
</dbReference>
<dbReference type="GO" id="GO:0009252">
    <property type="term" value="P:peptidoglycan biosynthetic process"/>
    <property type="evidence" value="ECO:0000314"/>
    <property type="project" value="EcoCyc"/>
</dbReference>
<dbReference type="GO" id="GO:0006508">
    <property type="term" value="P:proteolysis"/>
    <property type="evidence" value="ECO:0007669"/>
    <property type="project" value="UniProtKB-KW"/>
</dbReference>
<dbReference type="GO" id="GO:0008360">
    <property type="term" value="P:regulation of cell shape"/>
    <property type="evidence" value="ECO:0000316"/>
    <property type="project" value="EcoCyc"/>
</dbReference>
<dbReference type="GO" id="GO:0046677">
    <property type="term" value="P:response to antibiotic"/>
    <property type="evidence" value="ECO:0000314"/>
    <property type="project" value="EcoCyc"/>
</dbReference>
<dbReference type="FunFam" id="3.40.710.10:FF:000010">
    <property type="entry name" value="Penicillin-binding protein 1A"/>
    <property type="match status" value="1"/>
</dbReference>
<dbReference type="FunFam" id="3.40.710.10:FF:000013">
    <property type="entry name" value="Penicillin-binding protein 1A"/>
    <property type="match status" value="1"/>
</dbReference>
<dbReference type="FunFam" id="1.10.3810.10:FF:000003">
    <property type="entry name" value="Penicillin-binding protein 1a"/>
    <property type="match status" value="1"/>
</dbReference>
<dbReference type="Gene3D" id="1.10.3810.10">
    <property type="entry name" value="Biosynthetic peptidoglycan transglycosylase-like"/>
    <property type="match status" value="1"/>
</dbReference>
<dbReference type="Gene3D" id="3.40.710.10">
    <property type="entry name" value="DD-peptidase/beta-lactamase superfamily"/>
    <property type="match status" value="2"/>
</dbReference>
<dbReference type="InterPro" id="IPR012338">
    <property type="entry name" value="Beta-lactam/transpept-like"/>
</dbReference>
<dbReference type="InterPro" id="IPR001264">
    <property type="entry name" value="Glyco_trans_51"/>
</dbReference>
<dbReference type="InterPro" id="IPR050396">
    <property type="entry name" value="Glycosyltr_51/Transpeptidase"/>
</dbReference>
<dbReference type="InterPro" id="IPR023346">
    <property type="entry name" value="Lysozyme-like_dom_sf"/>
</dbReference>
<dbReference type="InterPro" id="IPR036950">
    <property type="entry name" value="PBP_transglycosylase"/>
</dbReference>
<dbReference type="InterPro" id="IPR031376">
    <property type="entry name" value="PCB_OB"/>
</dbReference>
<dbReference type="InterPro" id="IPR001460">
    <property type="entry name" value="PCN-bd_Tpept"/>
</dbReference>
<dbReference type="NCBIfam" id="TIGR02074">
    <property type="entry name" value="PBP_1a_fam"/>
    <property type="match status" value="1"/>
</dbReference>
<dbReference type="NCBIfam" id="NF008643">
    <property type="entry name" value="PRK11636.1"/>
    <property type="match status" value="1"/>
</dbReference>
<dbReference type="PANTHER" id="PTHR32282">
    <property type="entry name" value="BINDING PROTEIN TRANSPEPTIDASE, PUTATIVE-RELATED"/>
    <property type="match status" value="1"/>
</dbReference>
<dbReference type="PANTHER" id="PTHR32282:SF27">
    <property type="entry name" value="PENICILLIN-BINDING PROTEIN 1A"/>
    <property type="match status" value="1"/>
</dbReference>
<dbReference type="Pfam" id="PF17092">
    <property type="entry name" value="PCB_OB"/>
    <property type="match status" value="1"/>
</dbReference>
<dbReference type="Pfam" id="PF00912">
    <property type="entry name" value="Transgly"/>
    <property type="match status" value="1"/>
</dbReference>
<dbReference type="Pfam" id="PF00905">
    <property type="entry name" value="Transpeptidase"/>
    <property type="match status" value="1"/>
</dbReference>
<dbReference type="SUPFAM" id="SSF56601">
    <property type="entry name" value="beta-lactamase/transpeptidase-like"/>
    <property type="match status" value="1"/>
</dbReference>
<dbReference type="SUPFAM" id="SSF53955">
    <property type="entry name" value="Lysozyme-like"/>
    <property type="match status" value="1"/>
</dbReference>
<proteinExistence type="evidence at protein level"/>
<reference key="1">
    <citation type="journal article" date="1985" name="Eur. J. Biochem.">
        <title>The nucleotide sequences of the ponA and ponB genes encoding penicillin-binding protein 1A and 1B of Escherichia coli K12.</title>
        <authorList>
            <person name="Broome-Smith J.K."/>
            <person name="Edelman A."/>
            <person name="Yousif S."/>
            <person name="Spratt B.G."/>
        </authorList>
    </citation>
    <scope>NUCLEOTIDE SEQUENCE [GENOMIC DNA]</scope>
    <source>
        <strain>K12</strain>
    </source>
</reference>
<reference key="2">
    <citation type="journal article" date="1997" name="Science">
        <title>The complete genome sequence of Escherichia coli K-12.</title>
        <authorList>
            <person name="Blattner F.R."/>
            <person name="Plunkett G. III"/>
            <person name="Bloch C.A."/>
            <person name="Perna N.T."/>
            <person name="Burland V."/>
            <person name="Riley M."/>
            <person name="Collado-Vides J."/>
            <person name="Glasner J.D."/>
            <person name="Rode C.K."/>
            <person name="Mayhew G.F."/>
            <person name="Gregor J."/>
            <person name="Davis N.W."/>
            <person name="Kirkpatrick H.A."/>
            <person name="Goeden M.A."/>
            <person name="Rose D.J."/>
            <person name="Mau B."/>
            <person name="Shao Y."/>
        </authorList>
    </citation>
    <scope>NUCLEOTIDE SEQUENCE [LARGE SCALE GENOMIC DNA]</scope>
    <source>
        <strain>K12 / MG1655 / ATCC 47076</strain>
    </source>
</reference>
<reference key="3">
    <citation type="journal article" date="2006" name="Mol. Syst. Biol.">
        <title>Highly accurate genome sequences of Escherichia coli K-12 strains MG1655 and W3110.</title>
        <authorList>
            <person name="Hayashi K."/>
            <person name="Morooka N."/>
            <person name="Yamamoto Y."/>
            <person name="Fujita K."/>
            <person name="Isono K."/>
            <person name="Choi S."/>
            <person name="Ohtsubo E."/>
            <person name="Baba T."/>
            <person name="Wanner B.L."/>
            <person name="Mori H."/>
            <person name="Horiuchi T."/>
        </authorList>
    </citation>
    <scope>NUCLEOTIDE SEQUENCE [LARGE SCALE GENOMIC DNA]</scope>
    <source>
        <strain>K12 / W3110 / ATCC 27325 / DSM 5911</strain>
    </source>
</reference>
<reference key="4">
    <citation type="journal article" date="1985" name="Proc. Natl. Acad. Sci. U.S.A.">
        <title>Sequences of the active-site peptides of three of the high-Mr penicillin-binding proteins of Escherichia coli K-12.</title>
        <authorList>
            <person name="Keck W."/>
            <person name="Glauner B."/>
            <person name="Schwarz U."/>
            <person name="Broome-Smith J.K."/>
            <person name="Spratt B.G."/>
        </authorList>
    </citation>
    <scope>PROTEIN SEQUENCE OF 452-480</scope>
    <source>
        <strain>K12</strain>
    </source>
</reference>
<reference key="5">
    <citation type="journal article" date="1980" name="Biochem. Biophys. Res. Commun.">
        <title>Dual enzyme activities of cell wall peptidoglycan synthesis, peptidoglycan transglycosylase and penicillin-sensitive transpeptidase, in purified preparations of Escherichia coli penicillin-binding protein 1A.</title>
        <authorList>
            <person name="Ishino F."/>
            <person name="Mitsui K."/>
            <person name="Tamaki S."/>
            <person name="Matsuhashi M."/>
        </authorList>
    </citation>
    <scope>FUNCTION</scope>
    <scope>CATALYTIC ACTIVITY</scope>
    <scope>PATHWAY</scope>
    <scope>SUBCELLULAR LOCATION</scope>
    <source>
        <strain>K12</strain>
    </source>
</reference>
<reference key="6">
    <citation type="journal article" date="1998" name="Microbiol. Mol. Biol. Rev.">
        <title>Multimodular penicillin-binding proteins: an enigmatic family of orthologs and paralogs.</title>
        <authorList>
            <person name="Goffin C."/>
            <person name="Ghuysen J.-M."/>
        </authorList>
    </citation>
    <scope>REVIEW</scope>
</reference>
<evidence type="ECO:0000250" key="1">
    <source>
        <dbReference type="UniProtKB" id="P02919"/>
    </source>
</evidence>
<evidence type="ECO:0000255" key="2"/>
<evidence type="ECO:0000269" key="3">
    <source>
    </source>
</evidence>
<evidence type="ECO:0000305" key="4"/>
<organism>
    <name type="scientific">Escherichia coli (strain K12)</name>
    <dbReference type="NCBI Taxonomy" id="83333"/>
    <lineage>
        <taxon>Bacteria</taxon>
        <taxon>Pseudomonadati</taxon>
        <taxon>Pseudomonadota</taxon>
        <taxon>Gammaproteobacteria</taxon>
        <taxon>Enterobacterales</taxon>
        <taxon>Enterobacteriaceae</taxon>
        <taxon>Escherichia</taxon>
    </lineage>
</organism>
<comment type="function">
    <text evidence="3">Cell wall formation. Synthesis of cross-linked peptidoglycan from the lipid intermediates. The enzyme has a penicillin-insensitive transglycosylase N-terminal domain (formation of linear glycan strands) and a penicillin-sensitive transpeptidase C-terminal domain (cross-linking of the peptide subunits).</text>
</comment>
<comment type="catalytic activity">
    <reaction evidence="3">
        <text>[GlcNAc-(1-&gt;4)-Mur2Ac(oyl-L-Ala-gamma-D-Glu-L-Lys-D-Ala-D-Ala)](n)-di-trans,octa-cis-undecaprenyl diphosphate + beta-D-GlcNAc-(1-&gt;4)-Mur2Ac(oyl-L-Ala-gamma-D-Glu-L-Lys-D-Ala-D-Ala)-di-trans,octa-cis-undecaprenyl diphosphate = [GlcNAc-(1-&gt;4)-Mur2Ac(oyl-L-Ala-gamma-D-Glu-L-Lys-D-Ala-D-Ala)](n+1)-di-trans,octa-cis-undecaprenyl diphosphate + di-trans,octa-cis-undecaprenyl diphosphate + H(+)</text>
        <dbReference type="Rhea" id="RHEA:23708"/>
        <dbReference type="Rhea" id="RHEA-COMP:9602"/>
        <dbReference type="Rhea" id="RHEA-COMP:9603"/>
        <dbReference type="ChEBI" id="CHEBI:15378"/>
        <dbReference type="ChEBI" id="CHEBI:58405"/>
        <dbReference type="ChEBI" id="CHEBI:60033"/>
        <dbReference type="ChEBI" id="CHEBI:78435"/>
        <dbReference type="EC" id="2.4.99.28"/>
    </reaction>
</comment>
<comment type="catalytic activity">
    <reaction evidence="3">
        <text>Preferential cleavage: (Ac)2-L-Lys-D-Ala-|-D-Ala. Also transpeptidation of peptidyl-alanyl moieties that are N-acyl substituents of D-alanine.</text>
        <dbReference type="EC" id="3.4.16.4"/>
    </reaction>
</comment>
<comment type="pathway">
    <text evidence="3">Cell wall biogenesis; peptidoglycan biosynthesis.</text>
</comment>
<comment type="interaction">
    <interactant intactId="EBI-1126191">
        <id>P02918</id>
    </interactant>
    <interactant intactId="EBI-557795">
        <id>P45464</id>
        <label>lpoA</label>
    </interactant>
    <organismsDiffer>false</organismsDiffer>
    <experiments>4</experiments>
</comment>
<comment type="interaction">
    <interactant intactId="EBI-1126191">
        <id>P02918</id>
    </interactant>
    <interactant intactId="EBI-1124032">
        <id>P0AD65</id>
        <label>mrdA</label>
    </interactant>
    <organismsDiffer>false</organismsDiffer>
    <experiments>5</experiments>
</comment>
<comment type="subcellular location">
    <subcellularLocation>
        <location evidence="3">Cell inner membrane</location>
        <topology evidence="2">Single-pass type II membrane protein</topology>
    </subcellularLocation>
</comment>
<comment type="similarity">
    <text evidence="4">In the N-terminal section; belongs to the glycosyltransferase 51 family.</text>
</comment>
<comment type="similarity">
    <text evidence="4">In the C-terminal section; belongs to the transpeptidase family.</text>
</comment>
<comment type="sequence caution" evidence="4">
    <conflict type="erroneous initiation">
        <sequence resource="EMBL-CDS" id="AAA58193"/>
    </conflict>
    <text>Extended N-terminus.</text>
</comment>
<sequence length="850" mass="93636">MKFVKYFLILAVCCILLGAGSIYGLYRYIEPQLPDVATLKDVRLQIPMQIYSADGELIAQYGEKRRIPVTLDQIPPEMVKAFIATEDSRFYEHHGVDPVGIFRAASVALFSGHASQGASTITQQLARNFFLSPERTLMRKIKEVFLAIRIEQLLTKDEILELYLNKIYLGYRAYGVGAAAQVYFGKTVDQLTLNEMAVIAGLPKAPSTFNPLYSMDRAVARRNVVLSRMLDEGYITQQQFDQTRTEAINANYHAPEIAFSAPYLSEMVRQEMYNRYGESAYEDGYRIYTTITRKVQQAAQQAVRNNVLDYDMRHGYRGPANVLWKVGESAWDNNKITDTLKALPTYGPLLPAAVTSANPQQATAMLADGSTVALSMEGVRWARPYRSDTQQGPTPRKVTDVLQTGQQIWVRQVGDAWWLAQVPEVNSALVSINPQNGAVMALVGGFDFNQSKFNRATQALRQVGSNIKPFLYTAAMDKGLTLASMLNDVPISRWDASAGSDWQPKNSPPQYAGPIRLRQGLGQSKNVVMVRAMRAMGVDYAAEYLQRFGFPAQNIVHTESLALGSASFTPMQVARGYAVMANGGFLVDPWFISKIENDQGGVIFEAKPKVACPECDIPVIYGDTQKSNVLENNDVEDVAISREQQNVSVPMPQLEQANQALVAKTGAQEYAPHVINTPLAFLIKSALNTNIFGEPGWQGTGWRAGRDLQRRDIGGKTGTTNSSKDAWFSGYGPGVVTSVWIGFDDHRRNLGHTTASGAIKDQISGYEGGAKSAQPAWDAYMKAVLEGVPEQPLTPPPGIVTVNIDRSTGQLANGGNSREEYFIEGTQPTQQAVHEVGTTIIDNGEAQELF</sequence>
<protein>
    <recommendedName>
        <fullName>Penicillin-binding protein 1A</fullName>
        <shortName>PBP-1a</shortName>
        <shortName>PBP1a</shortName>
    </recommendedName>
    <domain>
        <recommendedName>
            <fullName>Penicillin-insensitive transglycosylase</fullName>
            <ecNumber evidence="3">2.4.99.28</ecNumber>
        </recommendedName>
        <alternativeName>
            <fullName>Peptidoglycan TGase</fullName>
        </alternativeName>
    </domain>
    <domain>
        <recommendedName>
            <fullName>Penicillin-sensitive transpeptidase</fullName>
            <ecNumber evidence="3">3.4.16.4</ecNumber>
        </recommendedName>
        <alternativeName>
            <fullName>DD-transpeptidase</fullName>
        </alternativeName>
    </domain>
</protein>
<gene>
    <name type="primary">mrcA</name>
    <name type="synonym">ponA</name>
    <name type="ordered locus">b3396</name>
    <name type="ordered locus">JW3359</name>
</gene>
<name>PBPA_ECOLI</name>
<keyword id="KW-0046">Antibiotic resistance</keyword>
<keyword id="KW-0121">Carboxypeptidase</keyword>
<keyword id="KW-0997">Cell inner membrane</keyword>
<keyword id="KW-1003">Cell membrane</keyword>
<keyword id="KW-0133">Cell shape</keyword>
<keyword id="KW-0961">Cell wall biogenesis/degradation</keyword>
<keyword id="KW-0903">Direct protein sequencing</keyword>
<keyword id="KW-0328">Glycosyltransferase</keyword>
<keyword id="KW-0378">Hydrolase</keyword>
<keyword id="KW-0472">Membrane</keyword>
<keyword id="KW-0511">Multifunctional enzyme</keyword>
<keyword id="KW-0573">Peptidoglycan synthesis</keyword>
<keyword id="KW-0645">Protease</keyword>
<keyword id="KW-1185">Reference proteome</keyword>
<keyword id="KW-0735">Signal-anchor</keyword>
<keyword id="KW-0808">Transferase</keyword>
<keyword id="KW-0812">Transmembrane</keyword>
<keyword id="KW-1133">Transmembrane helix</keyword>